<protein>
    <recommendedName>
        <fullName evidence="3">Small ribosomal subunit protein uS4c</fullName>
    </recommendedName>
    <alternativeName>
        <fullName>30S ribosomal protein S4, chloroplastic</fullName>
    </alternativeName>
</protein>
<proteinExistence type="inferred from homology"/>
<accession>P0C486</accession>
<accession>P12147</accession>
<accession>Q6QY73</accession>
<accession>Q7G222</accession>
<comment type="function">
    <text evidence="1">One of the primary rRNA binding proteins, it binds directly to 16S rRNA where it nucleates assembly of the body of the 30S subunit.</text>
</comment>
<comment type="function">
    <text evidence="1">With S5 and S12 plays an important role in translational accuracy.</text>
</comment>
<comment type="subunit">
    <text evidence="1">Part of the 30S ribosomal subunit. Contacts protein S5. The interaction surface between S4 and S5 is involved in control of translational fidelity (By similarity).</text>
</comment>
<comment type="subcellular location">
    <subcellularLocation>
        <location>Plastid</location>
        <location>Chloroplast</location>
    </subcellularLocation>
</comment>
<comment type="similarity">
    <text evidence="3">Belongs to the universal ribosomal protein uS4 family.</text>
</comment>
<organism>
    <name type="scientific">Oryza sativa</name>
    <name type="common">Rice</name>
    <dbReference type="NCBI Taxonomy" id="4530"/>
    <lineage>
        <taxon>Eukaryota</taxon>
        <taxon>Viridiplantae</taxon>
        <taxon>Streptophyta</taxon>
        <taxon>Embryophyta</taxon>
        <taxon>Tracheophyta</taxon>
        <taxon>Spermatophyta</taxon>
        <taxon>Magnoliopsida</taxon>
        <taxon>Liliopsida</taxon>
        <taxon>Poales</taxon>
        <taxon>Poaceae</taxon>
        <taxon>BOP clade</taxon>
        <taxon>Oryzoideae</taxon>
        <taxon>Oryzeae</taxon>
        <taxon>Oryzinae</taxon>
        <taxon>Oryza</taxon>
    </lineage>
</organism>
<feature type="chain" id="PRO_0000132642" description="Small ribosomal subunit protein uS4c">
    <location>
        <begin position="1"/>
        <end position="201"/>
    </location>
</feature>
<feature type="domain" description="S4 RNA-binding">
    <location>
        <begin position="89"/>
        <end position="150"/>
    </location>
</feature>
<feature type="region of interest" description="Disordered" evidence="2">
    <location>
        <begin position="20"/>
        <end position="39"/>
    </location>
</feature>
<gene>
    <name type="primary">rps4</name>
    <name type="ORF">PA054</name>
</gene>
<name>RR4_ORYSA</name>
<keyword id="KW-0150">Chloroplast</keyword>
<keyword id="KW-0934">Plastid</keyword>
<keyword id="KW-0687">Ribonucleoprotein</keyword>
<keyword id="KW-0689">Ribosomal protein</keyword>
<keyword id="KW-0694">RNA-binding</keyword>
<keyword id="KW-0699">rRNA-binding</keyword>
<evidence type="ECO:0000250" key="1"/>
<evidence type="ECO:0000256" key="2">
    <source>
        <dbReference type="SAM" id="MobiDB-lite"/>
    </source>
</evidence>
<evidence type="ECO:0000305" key="3"/>
<reference key="1">
    <citation type="journal article" date="2004" name="Plant Physiol.">
        <title>A comparison of rice chloroplast genomes.</title>
        <authorList>
            <person name="Tang J."/>
            <person name="Xia H."/>
            <person name="Cao M."/>
            <person name="Zhang X."/>
            <person name="Zeng W."/>
            <person name="Hu S."/>
            <person name="Tong W."/>
            <person name="Wang J."/>
            <person name="Wang J."/>
            <person name="Yu J."/>
            <person name="Yang H."/>
            <person name="Zhu L."/>
        </authorList>
    </citation>
    <scope>NUCLEOTIDE SEQUENCE [LARGE SCALE GENOMIC DNA]</scope>
    <source>
        <strain>cv. PA64s</strain>
    </source>
</reference>
<geneLocation type="chloroplast"/>
<sequence length="201" mass="23423">MSRYRGPRFKKIRRLGALPGLTRKTPKSGSNLKKKFHSGKKEQYRIRLQEKQKLRFHYGLTERQLLRYVHIAGKAKSSTGQVLLQLLEMRLDNILFRLGMASTIPEARQLVNHRHILVNGRIVDIPSFRCKPRDIITTKDNQRSKRLVQNSIASSDPGKLPKHLTIDTLQYKGLVKKILDRKWVGLKINELLVVEYYSRQT</sequence>
<dbReference type="EMBL" id="AY522331">
    <property type="protein sequence ID" value="AAS46185.1"/>
    <property type="molecule type" value="Genomic_DNA"/>
</dbReference>
<dbReference type="RefSeq" id="NP_039385.1">
    <property type="nucleotide sequence ID" value="NC_001320.1"/>
</dbReference>
<dbReference type="RefSeq" id="YP_009305306.1">
    <property type="nucleotide sequence ID" value="NC_031333.1"/>
</dbReference>
<dbReference type="SMR" id="P0C486"/>
<dbReference type="GeneID" id="29141366"/>
<dbReference type="GeneID" id="3131457"/>
<dbReference type="KEGG" id="osa:3131457"/>
<dbReference type="GO" id="GO:0009507">
    <property type="term" value="C:chloroplast"/>
    <property type="evidence" value="ECO:0007669"/>
    <property type="project" value="UniProtKB-SubCell"/>
</dbReference>
<dbReference type="GO" id="GO:0009536">
    <property type="term" value="C:plastid"/>
    <property type="evidence" value="ECO:0000305"/>
    <property type="project" value="Gramene"/>
</dbReference>
<dbReference type="GO" id="GO:0015935">
    <property type="term" value="C:small ribosomal subunit"/>
    <property type="evidence" value="ECO:0007669"/>
    <property type="project" value="InterPro"/>
</dbReference>
<dbReference type="GO" id="GO:0019843">
    <property type="term" value="F:rRNA binding"/>
    <property type="evidence" value="ECO:0007669"/>
    <property type="project" value="UniProtKB-UniRule"/>
</dbReference>
<dbReference type="GO" id="GO:0003735">
    <property type="term" value="F:structural constituent of ribosome"/>
    <property type="evidence" value="ECO:0007669"/>
    <property type="project" value="InterPro"/>
</dbReference>
<dbReference type="GO" id="GO:0042274">
    <property type="term" value="P:ribosomal small subunit biogenesis"/>
    <property type="evidence" value="ECO:0007669"/>
    <property type="project" value="TreeGrafter"/>
</dbReference>
<dbReference type="GO" id="GO:0006412">
    <property type="term" value="P:translation"/>
    <property type="evidence" value="ECO:0007669"/>
    <property type="project" value="UniProtKB-UniRule"/>
</dbReference>
<dbReference type="CDD" id="cd00165">
    <property type="entry name" value="S4"/>
    <property type="match status" value="1"/>
</dbReference>
<dbReference type="FunFam" id="1.10.1050.10:FF:000002">
    <property type="entry name" value="30S ribosomal protein S4, chloroplastic"/>
    <property type="match status" value="1"/>
</dbReference>
<dbReference type="FunFam" id="3.10.290.10:FF:000081">
    <property type="entry name" value="30S ribosomal protein S4, chloroplastic"/>
    <property type="match status" value="1"/>
</dbReference>
<dbReference type="Gene3D" id="1.10.1050.10">
    <property type="entry name" value="Ribosomal Protein S4 Delta 41, Chain A, domain 1"/>
    <property type="match status" value="1"/>
</dbReference>
<dbReference type="Gene3D" id="3.10.290.10">
    <property type="entry name" value="RNA-binding S4 domain"/>
    <property type="match status" value="1"/>
</dbReference>
<dbReference type="HAMAP" id="MF_01306_B">
    <property type="entry name" value="Ribosomal_uS4_B"/>
    <property type="match status" value="1"/>
</dbReference>
<dbReference type="InterPro" id="IPR022801">
    <property type="entry name" value="Ribosomal_uS4"/>
</dbReference>
<dbReference type="InterPro" id="IPR005709">
    <property type="entry name" value="Ribosomal_uS4_bac-type"/>
</dbReference>
<dbReference type="InterPro" id="IPR018079">
    <property type="entry name" value="Ribosomal_uS4_CS"/>
</dbReference>
<dbReference type="InterPro" id="IPR001912">
    <property type="entry name" value="Ribosomal_uS4_N"/>
</dbReference>
<dbReference type="InterPro" id="IPR002942">
    <property type="entry name" value="S4_RNA-bd"/>
</dbReference>
<dbReference type="InterPro" id="IPR036986">
    <property type="entry name" value="S4_RNA-bd_sf"/>
</dbReference>
<dbReference type="NCBIfam" id="NF003717">
    <property type="entry name" value="PRK05327.1"/>
    <property type="match status" value="1"/>
</dbReference>
<dbReference type="NCBIfam" id="TIGR01017">
    <property type="entry name" value="rpsD_bact"/>
    <property type="match status" value="1"/>
</dbReference>
<dbReference type="PANTHER" id="PTHR11831">
    <property type="entry name" value="30S 40S RIBOSOMAL PROTEIN"/>
    <property type="match status" value="1"/>
</dbReference>
<dbReference type="PANTHER" id="PTHR11831:SF4">
    <property type="entry name" value="SMALL RIBOSOMAL SUBUNIT PROTEIN US4M"/>
    <property type="match status" value="1"/>
</dbReference>
<dbReference type="Pfam" id="PF00163">
    <property type="entry name" value="Ribosomal_S4"/>
    <property type="match status" value="1"/>
</dbReference>
<dbReference type="Pfam" id="PF01479">
    <property type="entry name" value="S4"/>
    <property type="match status" value="1"/>
</dbReference>
<dbReference type="SMART" id="SM01390">
    <property type="entry name" value="Ribosomal_S4"/>
    <property type="match status" value="1"/>
</dbReference>
<dbReference type="SMART" id="SM00363">
    <property type="entry name" value="S4"/>
    <property type="match status" value="1"/>
</dbReference>
<dbReference type="SUPFAM" id="SSF55174">
    <property type="entry name" value="Alpha-L RNA-binding motif"/>
    <property type="match status" value="1"/>
</dbReference>
<dbReference type="PROSITE" id="PS00632">
    <property type="entry name" value="RIBOSOMAL_S4"/>
    <property type="match status" value="1"/>
</dbReference>
<dbReference type="PROSITE" id="PS50889">
    <property type="entry name" value="S4"/>
    <property type="match status" value="1"/>
</dbReference>